<feature type="chain" id="PRO_0000442991" description="Transcription factor MYB54">
    <location>
        <begin position="1"/>
        <end position="243"/>
    </location>
</feature>
<feature type="domain" description="HTH myb-type 1" evidence="1">
    <location>
        <begin position="1"/>
        <end position="52"/>
    </location>
</feature>
<feature type="domain" description="HTH myb-type 2" evidence="1">
    <location>
        <begin position="53"/>
        <end position="107"/>
    </location>
</feature>
<feature type="DNA-binding region" description="H-T-H motif" evidence="1">
    <location>
        <begin position="29"/>
        <end position="51"/>
    </location>
</feature>
<feature type="DNA-binding region" description="H-T-H motif" evidence="1">
    <location>
        <begin position="80"/>
        <end position="103"/>
    </location>
</feature>
<feature type="region of interest" description="Disordered" evidence="2">
    <location>
        <begin position="206"/>
        <end position="227"/>
    </location>
</feature>
<feature type="compositionally biased region" description="Basic and acidic residues" evidence="2">
    <location>
        <begin position="216"/>
        <end position="227"/>
    </location>
</feature>
<feature type="sequence conflict" description="In Ref. 1; AAC83612." evidence="5" ref="1">
    <original>T</original>
    <variation>P</variation>
    <location>
        <position position="176"/>
    </location>
</feature>
<feature type="sequence conflict" description="In Ref. 1; AAC83612." evidence="5" ref="1">
    <original>N</original>
    <variation>S</variation>
    <location>
        <position position="182"/>
    </location>
</feature>
<gene>
    <name evidence="4" type="primary">MYB54</name>
    <name evidence="6" type="ordered locus">At1g73410</name>
    <name evidence="7" type="ORF">T9L24.38</name>
</gene>
<proteinExistence type="evidence at protein level"/>
<reference key="1">
    <citation type="journal article" date="1998" name="Plant J.">
        <title>Towards functional characterisation of the members of the R2R3-MYB gene family from Arabidopsis thaliana.</title>
        <authorList>
            <person name="Kranz H.D."/>
            <person name="Denekamp M."/>
            <person name="Greco R."/>
            <person name="Jin H.-L."/>
            <person name="Leyva A."/>
            <person name="Meissner R.C."/>
            <person name="Petroni K."/>
            <person name="Urzainqui A."/>
            <person name="Bevan M."/>
            <person name="Martin C."/>
            <person name="Smeekens S."/>
            <person name="Tonelli C."/>
            <person name="Paz-Ares J."/>
            <person name="Weisshaar B."/>
        </authorList>
    </citation>
    <scope>NUCLEOTIDE SEQUENCE [MRNA]</scope>
    <source>
        <strain>cv. Columbia</strain>
    </source>
</reference>
<reference key="2">
    <citation type="submission" date="2004-01" db="EMBL/GenBank/DDBJ databases">
        <title>The MYB transcription factor family in Arabidopsis: A genome-wide cloning and expression pattern analysis.</title>
        <authorList>
            <person name="Qu L."/>
            <person name="Gu H."/>
        </authorList>
    </citation>
    <scope>NUCLEOTIDE SEQUENCE [MRNA]</scope>
</reference>
<reference key="3">
    <citation type="journal article" date="2000" name="Nature">
        <title>Sequence and analysis of chromosome 1 of the plant Arabidopsis thaliana.</title>
        <authorList>
            <person name="Theologis A."/>
            <person name="Ecker J.R."/>
            <person name="Palm C.J."/>
            <person name="Federspiel N.A."/>
            <person name="Kaul S."/>
            <person name="White O."/>
            <person name="Alonso J."/>
            <person name="Altafi H."/>
            <person name="Araujo R."/>
            <person name="Bowman C.L."/>
            <person name="Brooks S.Y."/>
            <person name="Buehler E."/>
            <person name="Chan A."/>
            <person name="Chao Q."/>
            <person name="Chen H."/>
            <person name="Cheuk R.F."/>
            <person name="Chin C.W."/>
            <person name="Chung M.K."/>
            <person name="Conn L."/>
            <person name="Conway A.B."/>
            <person name="Conway A.R."/>
            <person name="Creasy T.H."/>
            <person name="Dewar K."/>
            <person name="Dunn P."/>
            <person name="Etgu P."/>
            <person name="Feldblyum T.V."/>
            <person name="Feng J.-D."/>
            <person name="Fong B."/>
            <person name="Fujii C.Y."/>
            <person name="Gill J.E."/>
            <person name="Goldsmith A.D."/>
            <person name="Haas B."/>
            <person name="Hansen N.F."/>
            <person name="Hughes B."/>
            <person name="Huizar L."/>
            <person name="Hunter J.L."/>
            <person name="Jenkins J."/>
            <person name="Johnson-Hopson C."/>
            <person name="Khan S."/>
            <person name="Khaykin E."/>
            <person name="Kim C.J."/>
            <person name="Koo H.L."/>
            <person name="Kremenetskaia I."/>
            <person name="Kurtz D.B."/>
            <person name="Kwan A."/>
            <person name="Lam B."/>
            <person name="Langin-Hooper S."/>
            <person name="Lee A."/>
            <person name="Lee J.M."/>
            <person name="Lenz C.A."/>
            <person name="Li J.H."/>
            <person name="Li Y.-P."/>
            <person name="Lin X."/>
            <person name="Liu S.X."/>
            <person name="Liu Z.A."/>
            <person name="Luros J.S."/>
            <person name="Maiti R."/>
            <person name="Marziali A."/>
            <person name="Militscher J."/>
            <person name="Miranda M."/>
            <person name="Nguyen M."/>
            <person name="Nierman W.C."/>
            <person name="Osborne B.I."/>
            <person name="Pai G."/>
            <person name="Peterson J."/>
            <person name="Pham P.K."/>
            <person name="Rizzo M."/>
            <person name="Rooney T."/>
            <person name="Rowley D."/>
            <person name="Sakano H."/>
            <person name="Salzberg S.L."/>
            <person name="Schwartz J.R."/>
            <person name="Shinn P."/>
            <person name="Southwick A.M."/>
            <person name="Sun H."/>
            <person name="Tallon L.J."/>
            <person name="Tambunga G."/>
            <person name="Toriumi M.J."/>
            <person name="Town C.D."/>
            <person name="Utterback T."/>
            <person name="Van Aken S."/>
            <person name="Vaysberg M."/>
            <person name="Vysotskaia V.S."/>
            <person name="Walker M."/>
            <person name="Wu D."/>
            <person name="Yu G."/>
            <person name="Fraser C.M."/>
            <person name="Venter J.C."/>
            <person name="Davis R.W."/>
        </authorList>
    </citation>
    <scope>NUCLEOTIDE SEQUENCE [LARGE SCALE GENOMIC DNA]</scope>
    <source>
        <strain>cv. Columbia</strain>
    </source>
</reference>
<reference key="4">
    <citation type="journal article" date="2017" name="Plant J.">
        <title>Araport11: a complete reannotation of the Arabidopsis thaliana reference genome.</title>
        <authorList>
            <person name="Cheng C.Y."/>
            <person name="Krishnakumar V."/>
            <person name="Chan A.P."/>
            <person name="Thibaud-Nissen F."/>
            <person name="Schobel S."/>
            <person name="Town C.D."/>
        </authorList>
    </citation>
    <scope>GENOME REANNOTATION</scope>
    <source>
        <strain>cv. Columbia</strain>
    </source>
</reference>
<reference key="5">
    <citation type="submission" date="2006-03" db="EMBL/GenBank/DDBJ databases">
        <title>Arabidopsis ORF clones.</title>
        <authorList>
            <person name="Kim C.J."/>
            <person name="Chen H."/>
            <person name="Shinn P."/>
            <person name="Ecker J.R."/>
        </authorList>
    </citation>
    <scope>NUCLEOTIDE SEQUENCE [LARGE SCALE MRNA]</scope>
    <source>
        <strain>cv. Columbia</strain>
    </source>
</reference>
<reference key="6">
    <citation type="submission" date="2006-07" db="EMBL/GenBank/DDBJ databases">
        <title>Large-scale analysis of RIKEN Arabidopsis full-length (RAFL) cDNAs.</title>
        <authorList>
            <person name="Totoki Y."/>
            <person name="Seki M."/>
            <person name="Ishida J."/>
            <person name="Nakajima M."/>
            <person name="Enju A."/>
            <person name="Kamiya A."/>
            <person name="Narusaka M."/>
            <person name="Shin-i T."/>
            <person name="Nakagawa M."/>
            <person name="Sakamoto N."/>
            <person name="Oishi K."/>
            <person name="Kohara Y."/>
            <person name="Kobayashi M."/>
            <person name="Toyoda A."/>
            <person name="Sakaki Y."/>
            <person name="Sakurai T."/>
            <person name="Iida K."/>
            <person name="Akiyama K."/>
            <person name="Satou M."/>
            <person name="Toyoda T."/>
            <person name="Konagaya A."/>
            <person name="Carninci P."/>
            <person name="Kawai J."/>
            <person name="Hayashizaki Y."/>
            <person name="Shinozaki K."/>
        </authorList>
    </citation>
    <scope>NUCLEOTIDE SEQUENCE [LARGE SCALE MRNA]</scope>
    <source>
        <strain>cv. Columbia</strain>
    </source>
</reference>
<reference key="7">
    <citation type="journal article" date="2008" name="Plant Cell">
        <title>A battery of transcription factors involved in the regulation of secondary cell wall biosynthesis in Arabidopsis.</title>
        <authorList>
            <person name="Zhong R."/>
            <person name="Lee C."/>
            <person name="Zhou J."/>
            <person name="McCarthy R.L."/>
            <person name="Ye Z.H."/>
        </authorList>
    </citation>
    <scope>FUNCTION</scope>
    <scope>SUBCELLULAR LOCATION</scope>
    <scope>TISSUE SPECIFICITY</scope>
</reference>
<sequence length="243" mass="28205">MIMCSRGHWRPAEDEKLKDLVEQYGPHNWNAIALKLPGRSGKSCRLRWFNQLDPRINRNPFTEEEEERLLAAHRIHGNRWSIIARLFPGRTDNAVKNHWHVIMARRTRQTSKPRLLPSTTSSSSLMASEQIMMSSGGYNHNYSSDDRKKIFPADFINFPYKFSHINHLHFLKEFFTGKIALNHKANQSKKPMEFYNFLQVNTDSNKSEIIDQDSGQSKRSDSDTKHESHVPFFDFLSVGNSAS</sequence>
<comment type="function">
    <text evidence="3">Transcription factor that regulates secondary cell wall (SCW) biosynthesis, especially in interfascicular and xylary fibers.</text>
</comment>
<comment type="interaction">
    <interactant intactId="EBI-25511270">
        <id>Q9FX36</id>
    </interactant>
    <interactant intactId="EBI-25522986">
        <id>Q9FIW5</id>
        <label>ANAC094</label>
    </interactant>
    <organismsDiffer>false</organismsDiffer>
    <experiments>3</experiments>
</comment>
<comment type="interaction">
    <interactant intactId="EBI-25511270">
        <id>Q9FX36</id>
    </interactant>
    <interactant intactId="EBI-3947588">
        <id>Q93YR9</id>
        <label>ARF16</label>
    </interactant>
    <organismsDiffer>false</organismsDiffer>
    <experiments>3</experiments>
</comment>
<comment type="interaction">
    <interactant intactId="EBI-25511270">
        <id>Q9FX36</id>
    </interactant>
    <interactant intactId="EBI-25511288">
        <id>A0A178VXH5</id>
        <label>AXX17_At2g40690</label>
    </interactant>
    <organismsDiffer>false</organismsDiffer>
    <experiments>4</experiments>
</comment>
<comment type="interaction">
    <interactant intactId="EBI-25511270">
        <id>Q9FX36</id>
    </interactant>
    <interactant intactId="EBI-15202166">
        <id>Q94AW5</id>
        <label>ERF003</label>
    </interactant>
    <organismsDiffer>false</organismsDiffer>
    <experiments>3</experiments>
</comment>
<comment type="interaction">
    <interactant intactId="EBI-25511270">
        <id>Q9FX36</id>
    </interactant>
    <interactant intactId="EBI-15200258">
        <id>Q3E703</id>
        <label>ERF088</label>
    </interactant>
    <organismsDiffer>false</organismsDiffer>
    <experiments>3</experiments>
</comment>
<comment type="interaction">
    <interactant intactId="EBI-25511270">
        <id>Q9FX36</id>
    </interactant>
    <interactant intactId="EBI-25515179">
        <id>Q9SK67</id>
        <label>ERF120</label>
    </interactant>
    <organismsDiffer>false</organismsDiffer>
    <experiments>3</experiments>
</comment>
<comment type="interaction">
    <interactant intactId="EBI-25511270">
        <id>Q9FX36</id>
    </interactant>
    <interactant intactId="EBI-1536925">
        <id>Q9FYK5</id>
        <label>ESR2</label>
    </interactant>
    <organismsDiffer>false</organismsDiffer>
    <experiments>4</experiments>
</comment>
<comment type="interaction">
    <interactant intactId="EBI-25511270">
        <id>Q9FX36</id>
    </interactant>
    <interactant intactId="EBI-963606">
        <id>Q9LQT8</id>
        <label>GAI</label>
    </interactant>
    <organismsDiffer>false</organismsDiffer>
    <experiments>3</experiments>
</comment>
<comment type="interaction">
    <interactant intactId="EBI-25511270">
        <id>Q9FX36</id>
    </interactant>
    <interactant intactId="EBI-530486">
        <id>P46639</id>
        <label>KNAT1</label>
    </interactant>
    <organismsDiffer>false</organismsDiffer>
    <experiments>5</experiments>
</comment>
<comment type="interaction">
    <interactant intactId="EBI-25511270">
        <id>Q9FX36</id>
    </interactant>
    <interactant intactId="EBI-25522919">
        <id>Q9SJW5</id>
        <label>LBD14</label>
    </interactant>
    <organismsDiffer>false</organismsDiffer>
    <experiments>3</experiments>
</comment>
<comment type="interaction">
    <interactant intactId="EBI-25511270">
        <id>Q9FX36</id>
    </interactant>
    <interactant intactId="EBI-25506855">
        <id>O23160</id>
        <label>MYB73</label>
    </interactant>
    <organismsDiffer>false</organismsDiffer>
    <experiments>3</experiments>
</comment>
<comment type="interaction">
    <interactant intactId="EBI-25511270">
        <id>Q9FX36</id>
    </interactant>
    <interactant intactId="EBI-15202792">
        <id>Q9S9Z2</id>
        <label>MYB93</label>
    </interactant>
    <organismsDiffer>false</organismsDiffer>
    <experiments>3</experiments>
</comment>
<comment type="interaction">
    <interactant intactId="EBI-25511270">
        <id>Q9FX36</id>
    </interactant>
    <interactant intactId="EBI-963665">
        <id>Q8GXW1</id>
        <label>RGL2</label>
    </interactant>
    <organismsDiffer>false</organismsDiffer>
    <experiments>3</experiments>
</comment>
<comment type="interaction">
    <interactant intactId="EBI-25511270">
        <id>Q9FX36</id>
    </interactant>
    <interactant intactId="EBI-15681313">
        <id>Q9LF53</id>
        <label>RGL3</label>
    </interactant>
    <organismsDiffer>false</organismsDiffer>
    <experiments>3</experiments>
</comment>
<comment type="interaction">
    <interactant intactId="EBI-25511270">
        <id>Q9FX36</id>
    </interactant>
    <interactant intactId="EBI-1238460">
        <id>Q9FHZ1</id>
        <label>SCL23</label>
    </interactant>
    <organismsDiffer>false</organismsDiffer>
    <experiments>3</experiments>
</comment>
<comment type="interaction">
    <interactant intactId="EBI-25511270">
        <id>Q9FX36</id>
    </interactant>
    <interactant intactId="EBI-15192297">
        <id>Q9LQF0</id>
        <label>TCP23</label>
    </interactant>
    <organismsDiffer>false</organismsDiffer>
    <experiments>3</experiments>
</comment>
<comment type="subcellular location">
    <subcellularLocation>
        <location evidence="1 3">Nucleus</location>
    </subcellularLocation>
</comment>
<comment type="tissue specificity">
    <text evidence="3">In elongating stem internodes, expressed in developing protoxylem and elongating interfascicular fiber cells. In non-elongating internodes, expressed in developing metaxylem cells and interfascicular fibers. In roots, expressed in developing secondary xylem.</text>
</comment>
<comment type="miscellaneous">
    <text evidence="3">Plants silencing MYB54 exhibit secondary cell wall (SCW) defects including severe reduction in SCW thickening in both interfascicular fibers and xylary fibers of inflorescence stems.</text>
</comment>
<name>MYB54_ARATH</name>
<protein>
    <recommendedName>
        <fullName evidence="4">Transcription factor MYB54</fullName>
    </recommendedName>
    <alternativeName>
        <fullName evidence="4">Myb-related protein 54</fullName>
        <shortName evidence="4">AtMYB54</shortName>
    </alternativeName>
</protein>
<accession>Q9FX36</accession>
<accession>Q9ZTD7</accession>
<dbReference type="EMBL" id="AF062890">
    <property type="protein sequence ID" value="AAC83612.1"/>
    <property type="molecule type" value="mRNA"/>
</dbReference>
<dbReference type="EMBL" id="AY519569">
    <property type="protein sequence ID" value="AAS10039.1"/>
    <property type="molecule type" value="mRNA"/>
</dbReference>
<dbReference type="EMBL" id="AC012396">
    <property type="protein sequence ID" value="AAG30986.1"/>
    <property type="molecule type" value="Genomic_DNA"/>
</dbReference>
<dbReference type="EMBL" id="CP002684">
    <property type="protein sequence ID" value="AEE35458.1"/>
    <property type="molecule type" value="Genomic_DNA"/>
</dbReference>
<dbReference type="EMBL" id="BT024851">
    <property type="protein sequence ID" value="ABD60734.1"/>
    <property type="molecule type" value="mRNA"/>
</dbReference>
<dbReference type="EMBL" id="AK227402">
    <property type="protein sequence ID" value="BAE99406.1"/>
    <property type="molecule type" value="mRNA"/>
</dbReference>
<dbReference type="PIR" id="G96760">
    <property type="entry name" value="G96760"/>
</dbReference>
<dbReference type="PIR" id="T51662">
    <property type="entry name" value="T51662"/>
</dbReference>
<dbReference type="RefSeq" id="NP_177484.1">
    <property type="nucleotide sequence ID" value="NM_106001.3"/>
</dbReference>
<dbReference type="SMR" id="Q9FX36"/>
<dbReference type="FunCoup" id="Q9FX36">
    <property type="interactions" value="5"/>
</dbReference>
<dbReference type="IntAct" id="Q9FX36">
    <property type="interactions" value="16"/>
</dbReference>
<dbReference type="STRING" id="3702.Q9FX36"/>
<dbReference type="PaxDb" id="3702-AT1G73410.1"/>
<dbReference type="ProteomicsDB" id="251216"/>
<dbReference type="EnsemblPlants" id="AT1G73410.1">
    <property type="protein sequence ID" value="AT1G73410.1"/>
    <property type="gene ID" value="AT1G73410"/>
</dbReference>
<dbReference type="GeneID" id="843676"/>
<dbReference type="Gramene" id="AT1G73410.1">
    <property type="protein sequence ID" value="AT1G73410.1"/>
    <property type="gene ID" value="AT1G73410"/>
</dbReference>
<dbReference type="KEGG" id="ath:AT1G73410"/>
<dbReference type="Araport" id="AT1G73410"/>
<dbReference type="TAIR" id="AT1G73410">
    <property type="gene designation" value="MYB54"/>
</dbReference>
<dbReference type="eggNOG" id="KOG0048">
    <property type="taxonomic scope" value="Eukaryota"/>
</dbReference>
<dbReference type="HOGENOM" id="CLU_028567_18_1_1"/>
<dbReference type="InParanoid" id="Q9FX36"/>
<dbReference type="PhylomeDB" id="Q9FX36"/>
<dbReference type="PRO" id="PR:Q9FX36"/>
<dbReference type="Proteomes" id="UP000006548">
    <property type="component" value="Chromosome 1"/>
</dbReference>
<dbReference type="ExpressionAtlas" id="Q9FX36">
    <property type="expression patterns" value="baseline and differential"/>
</dbReference>
<dbReference type="GO" id="GO:0005634">
    <property type="term" value="C:nucleus"/>
    <property type="evidence" value="ECO:0000314"/>
    <property type="project" value="TAIR"/>
</dbReference>
<dbReference type="GO" id="GO:0003677">
    <property type="term" value="F:DNA binding"/>
    <property type="evidence" value="ECO:0000250"/>
    <property type="project" value="TAIR"/>
</dbReference>
<dbReference type="GO" id="GO:0003700">
    <property type="term" value="F:DNA-binding transcription factor activity"/>
    <property type="evidence" value="ECO:0000250"/>
    <property type="project" value="TAIR"/>
</dbReference>
<dbReference type="GO" id="GO:0000976">
    <property type="term" value="F:transcription cis-regulatory region binding"/>
    <property type="evidence" value="ECO:0000353"/>
    <property type="project" value="TAIR"/>
</dbReference>
<dbReference type="GO" id="GO:0071555">
    <property type="term" value="P:cell wall organization"/>
    <property type="evidence" value="ECO:0007669"/>
    <property type="project" value="UniProtKB-KW"/>
</dbReference>
<dbReference type="GO" id="GO:2000652">
    <property type="term" value="P:regulation of secondary cell wall biogenesis"/>
    <property type="evidence" value="ECO:0000315"/>
    <property type="project" value="TAIR"/>
</dbReference>
<dbReference type="CDD" id="cd00167">
    <property type="entry name" value="SANT"/>
    <property type="match status" value="2"/>
</dbReference>
<dbReference type="FunFam" id="1.10.10.60:FF:000060">
    <property type="entry name" value="MYB transcription factor"/>
    <property type="match status" value="1"/>
</dbReference>
<dbReference type="FunFam" id="1.10.10.60:FF:000356">
    <property type="entry name" value="MYB transcription factor"/>
    <property type="match status" value="1"/>
</dbReference>
<dbReference type="Gene3D" id="1.10.10.60">
    <property type="entry name" value="Homeodomain-like"/>
    <property type="match status" value="2"/>
</dbReference>
<dbReference type="InterPro" id="IPR009057">
    <property type="entry name" value="Homeodomain-like_sf"/>
</dbReference>
<dbReference type="InterPro" id="IPR017930">
    <property type="entry name" value="Myb_dom"/>
</dbReference>
<dbReference type="InterPro" id="IPR050560">
    <property type="entry name" value="MYB_TF"/>
</dbReference>
<dbReference type="InterPro" id="IPR001005">
    <property type="entry name" value="SANT/Myb"/>
</dbReference>
<dbReference type="PANTHER" id="PTHR45614">
    <property type="entry name" value="MYB PROTEIN-RELATED"/>
    <property type="match status" value="1"/>
</dbReference>
<dbReference type="PANTHER" id="PTHR45614:SF289">
    <property type="entry name" value="TRANSCRIPTION FACTOR MYB54"/>
    <property type="match status" value="1"/>
</dbReference>
<dbReference type="Pfam" id="PF13921">
    <property type="entry name" value="Myb_DNA-bind_6"/>
    <property type="match status" value="1"/>
</dbReference>
<dbReference type="SMART" id="SM00717">
    <property type="entry name" value="SANT"/>
    <property type="match status" value="2"/>
</dbReference>
<dbReference type="SUPFAM" id="SSF46689">
    <property type="entry name" value="Homeodomain-like"/>
    <property type="match status" value="1"/>
</dbReference>
<dbReference type="PROSITE" id="PS51294">
    <property type="entry name" value="HTH_MYB"/>
    <property type="match status" value="2"/>
</dbReference>
<organism>
    <name type="scientific">Arabidopsis thaliana</name>
    <name type="common">Mouse-ear cress</name>
    <dbReference type="NCBI Taxonomy" id="3702"/>
    <lineage>
        <taxon>Eukaryota</taxon>
        <taxon>Viridiplantae</taxon>
        <taxon>Streptophyta</taxon>
        <taxon>Embryophyta</taxon>
        <taxon>Tracheophyta</taxon>
        <taxon>Spermatophyta</taxon>
        <taxon>Magnoliopsida</taxon>
        <taxon>eudicotyledons</taxon>
        <taxon>Gunneridae</taxon>
        <taxon>Pentapetalae</taxon>
        <taxon>rosids</taxon>
        <taxon>malvids</taxon>
        <taxon>Brassicales</taxon>
        <taxon>Brassicaceae</taxon>
        <taxon>Camelineae</taxon>
        <taxon>Arabidopsis</taxon>
    </lineage>
</organism>
<evidence type="ECO:0000255" key="1">
    <source>
        <dbReference type="PROSITE-ProRule" id="PRU00625"/>
    </source>
</evidence>
<evidence type="ECO:0000256" key="2">
    <source>
        <dbReference type="SAM" id="MobiDB-lite"/>
    </source>
</evidence>
<evidence type="ECO:0000269" key="3">
    <source>
    </source>
</evidence>
<evidence type="ECO:0000303" key="4">
    <source>
    </source>
</evidence>
<evidence type="ECO:0000305" key="5"/>
<evidence type="ECO:0000312" key="6">
    <source>
        <dbReference type="Araport" id="AT1G73410"/>
    </source>
</evidence>
<evidence type="ECO:0000312" key="7">
    <source>
        <dbReference type="EMBL" id="AAG30986.1"/>
    </source>
</evidence>
<keyword id="KW-0961">Cell wall biogenesis/degradation</keyword>
<keyword id="KW-0238">DNA-binding</keyword>
<keyword id="KW-0539">Nucleus</keyword>
<keyword id="KW-1185">Reference proteome</keyword>
<keyword id="KW-0677">Repeat</keyword>
<keyword id="KW-0804">Transcription</keyword>
<keyword id="KW-0805">Transcription regulation</keyword>